<name>TRPB_BACSU</name>
<feature type="chain" id="PRO_0000098918" description="Tryptophan synthase beta chain">
    <location>
        <begin position="1"/>
        <end position="400"/>
    </location>
</feature>
<feature type="modified residue" description="N6-(pyridoxal phosphate)lysine" evidence="1">
    <location>
        <position position="90"/>
    </location>
</feature>
<feature type="sequence conflict" description="In Ref. 1; AAA20865/AAA22869." evidence="2" ref="1">
    <original>A</original>
    <variation>P</variation>
    <location>
        <position position="122"/>
    </location>
</feature>
<feature type="sequence conflict" description="In Ref. 1; AAA20865/AAA22869." evidence="2" ref="1">
    <original>A</original>
    <variation>R</variation>
    <location>
        <position position="398"/>
    </location>
</feature>
<accession>P07600</accession>
<reference key="1">
    <citation type="journal article" date="1985" name="Gene">
        <title>Nucleotide sequence of the Bacillus subtilis tryptophan operon.</title>
        <authorList>
            <person name="Henner D.J."/>
            <person name="Band L."/>
            <person name="Shimotsu H."/>
        </authorList>
    </citation>
    <scope>NUCLEOTIDE SEQUENCE [GENOMIC DNA]</scope>
</reference>
<reference key="2">
    <citation type="journal article" date="1997" name="Nature">
        <title>The complete genome sequence of the Gram-positive bacterium Bacillus subtilis.</title>
        <authorList>
            <person name="Kunst F."/>
            <person name="Ogasawara N."/>
            <person name="Moszer I."/>
            <person name="Albertini A.M."/>
            <person name="Alloni G."/>
            <person name="Azevedo V."/>
            <person name="Bertero M.G."/>
            <person name="Bessieres P."/>
            <person name="Bolotin A."/>
            <person name="Borchert S."/>
            <person name="Borriss R."/>
            <person name="Boursier L."/>
            <person name="Brans A."/>
            <person name="Braun M."/>
            <person name="Brignell S.C."/>
            <person name="Bron S."/>
            <person name="Brouillet S."/>
            <person name="Bruschi C.V."/>
            <person name="Caldwell B."/>
            <person name="Capuano V."/>
            <person name="Carter N.M."/>
            <person name="Choi S.-K."/>
            <person name="Codani J.-J."/>
            <person name="Connerton I.F."/>
            <person name="Cummings N.J."/>
            <person name="Daniel R.A."/>
            <person name="Denizot F."/>
            <person name="Devine K.M."/>
            <person name="Duesterhoeft A."/>
            <person name="Ehrlich S.D."/>
            <person name="Emmerson P.T."/>
            <person name="Entian K.-D."/>
            <person name="Errington J."/>
            <person name="Fabret C."/>
            <person name="Ferrari E."/>
            <person name="Foulger D."/>
            <person name="Fritz C."/>
            <person name="Fujita M."/>
            <person name="Fujita Y."/>
            <person name="Fuma S."/>
            <person name="Galizzi A."/>
            <person name="Galleron N."/>
            <person name="Ghim S.-Y."/>
            <person name="Glaser P."/>
            <person name="Goffeau A."/>
            <person name="Golightly E.J."/>
            <person name="Grandi G."/>
            <person name="Guiseppi G."/>
            <person name="Guy B.J."/>
            <person name="Haga K."/>
            <person name="Haiech J."/>
            <person name="Harwood C.R."/>
            <person name="Henaut A."/>
            <person name="Hilbert H."/>
            <person name="Holsappel S."/>
            <person name="Hosono S."/>
            <person name="Hullo M.-F."/>
            <person name="Itaya M."/>
            <person name="Jones L.-M."/>
            <person name="Joris B."/>
            <person name="Karamata D."/>
            <person name="Kasahara Y."/>
            <person name="Klaerr-Blanchard M."/>
            <person name="Klein C."/>
            <person name="Kobayashi Y."/>
            <person name="Koetter P."/>
            <person name="Koningstein G."/>
            <person name="Krogh S."/>
            <person name="Kumano M."/>
            <person name="Kurita K."/>
            <person name="Lapidus A."/>
            <person name="Lardinois S."/>
            <person name="Lauber J."/>
            <person name="Lazarevic V."/>
            <person name="Lee S.-M."/>
            <person name="Levine A."/>
            <person name="Liu H."/>
            <person name="Masuda S."/>
            <person name="Mauel C."/>
            <person name="Medigue C."/>
            <person name="Medina N."/>
            <person name="Mellado R.P."/>
            <person name="Mizuno M."/>
            <person name="Moestl D."/>
            <person name="Nakai S."/>
            <person name="Noback M."/>
            <person name="Noone D."/>
            <person name="O'Reilly M."/>
            <person name="Ogawa K."/>
            <person name="Ogiwara A."/>
            <person name="Oudega B."/>
            <person name="Park S.-H."/>
            <person name="Parro V."/>
            <person name="Pohl T.M."/>
            <person name="Portetelle D."/>
            <person name="Porwollik S."/>
            <person name="Prescott A.M."/>
            <person name="Presecan E."/>
            <person name="Pujic P."/>
            <person name="Purnelle B."/>
            <person name="Rapoport G."/>
            <person name="Rey M."/>
            <person name="Reynolds S."/>
            <person name="Rieger M."/>
            <person name="Rivolta C."/>
            <person name="Rocha E."/>
            <person name="Roche B."/>
            <person name="Rose M."/>
            <person name="Sadaie Y."/>
            <person name="Sato T."/>
            <person name="Scanlan E."/>
            <person name="Schleich S."/>
            <person name="Schroeter R."/>
            <person name="Scoffone F."/>
            <person name="Sekiguchi J."/>
            <person name="Sekowska A."/>
            <person name="Seror S.J."/>
            <person name="Serror P."/>
            <person name="Shin B.-S."/>
            <person name="Soldo B."/>
            <person name="Sorokin A."/>
            <person name="Tacconi E."/>
            <person name="Takagi T."/>
            <person name="Takahashi H."/>
            <person name="Takemaru K."/>
            <person name="Takeuchi M."/>
            <person name="Tamakoshi A."/>
            <person name="Tanaka T."/>
            <person name="Terpstra P."/>
            <person name="Tognoni A."/>
            <person name="Tosato V."/>
            <person name="Uchiyama S."/>
            <person name="Vandenbol M."/>
            <person name="Vannier F."/>
            <person name="Vassarotti A."/>
            <person name="Viari A."/>
            <person name="Wambutt R."/>
            <person name="Wedler E."/>
            <person name="Wedler H."/>
            <person name="Weitzenegger T."/>
            <person name="Winters P."/>
            <person name="Wipat A."/>
            <person name="Yamamoto H."/>
            <person name="Yamane K."/>
            <person name="Yasumoto K."/>
            <person name="Yata K."/>
            <person name="Yoshida K."/>
            <person name="Yoshikawa H.-F."/>
            <person name="Zumstein E."/>
            <person name="Yoshikawa H."/>
            <person name="Danchin A."/>
        </authorList>
    </citation>
    <scope>NUCLEOTIDE SEQUENCE [LARGE SCALE GENOMIC DNA]</scope>
    <source>
        <strain>168</strain>
    </source>
</reference>
<reference key="3">
    <citation type="journal article" date="1999" name="Genome Res.">
        <title>Detecting and analyzing DNA sequencing errors: toward a higher quality of the Bacillus subtilis genome sequence.</title>
        <authorList>
            <person name="Medigue C."/>
            <person name="Rose M."/>
            <person name="Viari A."/>
            <person name="Danchin A."/>
        </authorList>
    </citation>
    <scope>SEQUENCE REVISION TO 122 AND 398</scope>
</reference>
<protein>
    <recommendedName>
        <fullName>Tryptophan synthase beta chain</fullName>
        <ecNumber>4.2.1.20</ecNumber>
    </recommendedName>
</protein>
<sequence length="400" mass="43580">MYPYPNEIGRYGDFGGKFVPETLMQPLDEIQTAFKQIKDDPAFREEYYKLLKDYSGRPTALTYADRVTEYLGGAKIYLKREDLNHTGSHKINNALGQALLAKKMGKTKIIAETGAGQHGVAAATVAAKFGFSCTVFMGEEDVARQSLNVFRMKLLGAEVVPVTSGNGTLKDATNEAIRYWVQHCEDHFYMIGSVVGPHPYPQVVREFQKMIGEEAKDQLKRIEGTMPDKVVACVGGGSNAMGMFQAFLNEDVELIGAEAAGKGIDTPLHAATISKGTVGVIHGSLTYLIQDEFGQIIEPYSISAGLDYPGIGPEHAYLHKSGRVTYDSITDEEAVDALKLLSEKEGILPAIESAHALAKAFKLAKGMDRGQLILVCLSGRGDKDVNTLMNVLEEEVKAHV</sequence>
<keyword id="KW-0028">Amino-acid biosynthesis</keyword>
<keyword id="KW-0057">Aromatic amino acid biosynthesis</keyword>
<keyword id="KW-0456">Lyase</keyword>
<keyword id="KW-0663">Pyridoxal phosphate</keyword>
<keyword id="KW-1185">Reference proteome</keyword>
<keyword id="KW-0822">Tryptophan biosynthesis</keyword>
<proteinExistence type="inferred from homology"/>
<gene>
    <name type="primary">trpB</name>
    <name type="ordered locus">BSU22640</name>
</gene>
<comment type="function">
    <text>The beta subunit is responsible for the synthesis of L-tryptophan from indole and L-serine.</text>
</comment>
<comment type="catalytic activity">
    <reaction>
        <text>(1S,2R)-1-C-(indol-3-yl)glycerol 3-phosphate + L-serine = D-glyceraldehyde 3-phosphate + L-tryptophan + H2O</text>
        <dbReference type="Rhea" id="RHEA:10532"/>
        <dbReference type="ChEBI" id="CHEBI:15377"/>
        <dbReference type="ChEBI" id="CHEBI:33384"/>
        <dbReference type="ChEBI" id="CHEBI:57912"/>
        <dbReference type="ChEBI" id="CHEBI:58866"/>
        <dbReference type="ChEBI" id="CHEBI:59776"/>
        <dbReference type="EC" id="4.2.1.20"/>
    </reaction>
</comment>
<comment type="cofactor">
    <cofactor evidence="1">
        <name>pyridoxal 5'-phosphate</name>
        <dbReference type="ChEBI" id="CHEBI:597326"/>
    </cofactor>
</comment>
<comment type="pathway">
    <text>Amino-acid biosynthesis; L-tryptophan biosynthesis; L-tryptophan from chorismate: step 5/5.</text>
</comment>
<comment type="subunit">
    <text evidence="1">Tetramer of two alpha and two beta chains.</text>
</comment>
<comment type="similarity">
    <text evidence="2">Belongs to the TrpB family.</text>
</comment>
<evidence type="ECO:0000250" key="1"/>
<evidence type="ECO:0000305" key="2"/>
<dbReference type="EC" id="4.2.1.20"/>
<dbReference type="EMBL" id="M80245">
    <property type="protein sequence ID" value="AAA20865.1"/>
    <property type="molecule type" value="Genomic_DNA"/>
</dbReference>
<dbReference type="EMBL" id="K01391">
    <property type="protein sequence ID" value="AAA22869.1"/>
    <property type="molecule type" value="Genomic_DNA"/>
</dbReference>
<dbReference type="EMBL" id="AL009126">
    <property type="protein sequence ID" value="CAB14180.2"/>
    <property type="molecule type" value="Genomic_DNA"/>
</dbReference>
<dbReference type="PIR" id="E22794">
    <property type="entry name" value="E22794"/>
</dbReference>
<dbReference type="RefSeq" id="NP_390145.2">
    <property type="nucleotide sequence ID" value="NC_000964.3"/>
</dbReference>
<dbReference type="RefSeq" id="WP_003230605.1">
    <property type="nucleotide sequence ID" value="NZ_OZ025638.1"/>
</dbReference>
<dbReference type="SMR" id="P07600"/>
<dbReference type="FunCoup" id="P07600">
    <property type="interactions" value="648"/>
</dbReference>
<dbReference type="STRING" id="224308.BSU22640"/>
<dbReference type="PaxDb" id="224308-BSU22640"/>
<dbReference type="EnsemblBacteria" id="CAB14180">
    <property type="protein sequence ID" value="CAB14180"/>
    <property type="gene ID" value="BSU_22640"/>
</dbReference>
<dbReference type="GeneID" id="939010"/>
<dbReference type="KEGG" id="bsu:BSU22640"/>
<dbReference type="eggNOG" id="COG0133">
    <property type="taxonomic scope" value="Bacteria"/>
</dbReference>
<dbReference type="InParanoid" id="P07600"/>
<dbReference type="OrthoDB" id="9766131at2"/>
<dbReference type="PhylomeDB" id="P07600"/>
<dbReference type="BioCyc" id="BSUB:BSU22640-MONOMER"/>
<dbReference type="UniPathway" id="UPA00035">
    <property type="reaction ID" value="UER00044"/>
</dbReference>
<dbReference type="Proteomes" id="UP000001570">
    <property type="component" value="Chromosome"/>
</dbReference>
<dbReference type="GO" id="GO:0005737">
    <property type="term" value="C:cytoplasm"/>
    <property type="evidence" value="ECO:0000318"/>
    <property type="project" value="GO_Central"/>
</dbReference>
<dbReference type="GO" id="GO:0004834">
    <property type="term" value="F:tryptophan synthase activity"/>
    <property type="evidence" value="ECO:0007669"/>
    <property type="project" value="UniProtKB-UniRule"/>
</dbReference>
<dbReference type="GO" id="GO:0000162">
    <property type="term" value="P:L-tryptophan biosynthetic process"/>
    <property type="evidence" value="ECO:0000318"/>
    <property type="project" value="GO_Central"/>
</dbReference>
<dbReference type="CDD" id="cd06446">
    <property type="entry name" value="Trp-synth_B"/>
    <property type="match status" value="1"/>
</dbReference>
<dbReference type="FunFam" id="3.40.50.1100:FF:000001">
    <property type="entry name" value="Tryptophan synthase beta chain"/>
    <property type="match status" value="1"/>
</dbReference>
<dbReference type="FunFam" id="3.40.50.1100:FF:000004">
    <property type="entry name" value="Tryptophan synthase beta chain"/>
    <property type="match status" value="1"/>
</dbReference>
<dbReference type="Gene3D" id="3.40.50.1100">
    <property type="match status" value="2"/>
</dbReference>
<dbReference type="HAMAP" id="MF_00133">
    <property type="entry name" value="Trp_synth_beta"/>
    <property type="match status" value="1"/>
</dbReference>
<dbReference type="InterPro" id="IPR006653">
    <property type="entry name" value="Trp_synth_b_CS"/>
</dbReference>
<dbReference type="InterPro" id="IPR006654">
    <property type="entry name" value="Trp_synth_beta"/>
</dbReference>
<dbReference type="InterPro" id="IPR023026">
    <property type="entry name" value="Trp_synth_beta/beta-like"/>
</dbReference>
<dbReference type="InterPro" id="IPR001926">
    <property type="entry name" value="TrpB-like_PALP"/>
</dbReference>
<dbReference type="InterPro" id="IPR036052">
    <property type="entry name" value="TrpB-like_PALP_sf"/>
</dbReference>
<dbReference type="NCBIfam" id="TIGR00263">
    <property type="entry name" value="trpB"/>
    <property type="match status" value="1"/>
</dbReference>
<dbReference type="PANTHER" id="PTHR48077:SF3">
    <property type="entry name" value="TRYPTOPHAN SYNTHASE"/>
    <property type="match status" value="1"/>
</dbReference>
<dbReference type="PANTHER" id="PTHR48077">
    <property type="entry name" value="TRYPTOPHAN SYNTHASE-RELATED"/>
    <property type="match status" value="1"/>
</dbReference>
<dbReference type="Pfam" id="PF00291">
    <property type="entry name" value="PALP"/>
    <property type="match status" value="1"/>
</dbReference>
<dbReference type="PIRSF" id="PIRSF001413">
    <property type="entry name" value="Trp_syn_beta"/>
    <property type="match status" value="1"/>
</dbReference>
<dbReference type="SUPFAM" id="SSF53686">
    <property type="entry name" value="Tryptophan synthase beta subunit-like PLP-dependent enzymes"/>
    <property type="match status" value="1"/>
</dbReference>
<dbReference type="PROSITE" id="PS00168">
    <property type="entry name" value="TRP_SYNTHASE_BETA"/>
    <property type="match status" value="1"/>
</dbReference>
<organism>
    <name type="scientific">Bacillus subtilis (strain 168)</name>
    <dbReference type="NCBI Taxonomy" id="224308"/>
    <lineage>
        <taxon>Bacteria</taxon>
        <taxon>Bacillati</taxon>
        <taxon>Bacillota</taxon>
        <taxon>Bacilli</taxon>
        <taxon>Bacillales</taxon>
        <taxon>Bacillaceae</taxon>
        <taxon>Bacillus</taxon>
    </lineage>
</organism>